<organism>
    <name type="scientific">Escherichia coli O157:H7 (strain EC4115 / EHEC)</name>
    <dbReference type="NCBI Taxonomy" id="444450"/>
    <lineage>
        <taxon>Bacteria</taxon>
        <taxon>Pseudomonadati</taxon>
        <taxon>Pseudomonadota</taxon>
        <taxon>Gammaproteobacteria</taxon>
        <taxon>Enterobacterales</taxon>
        <taxon>Enterobacteriaceae</taxon>
        <taxon>Escherichia</taxon>
    </lineage>
</organism>
<reference key="1">
    <citation type="journal article" date="2011" name="Proc. Natl. Acad. Sci. U.S.A.">
        <title>Genomic anatomy of Escherichia coli O157:H7 outbreaks.</title>
        <authorList>
            <person name="Eppinger M."/>
            <person name="Mammel M.K."/>
            <person name="Leclerc J.E."/>
            <person name="Ravel J."/>
            <person name="Cebula T.A."/>
        </authorList>
    </citation>
    <scope>NUCLEOTIDE SEQUENCE [LARGE SCALE GENOMIC DNA]</scope>
    <source>
        <strain>EC4115 / EHEC</strain>
    </source>
</reference>
<name>PIMT_ECO5E</name>
<gene>
    <name evidence="1" type="primary">pcm</name>
    <name type="ordered locus">ECH74115_3994</name>
</gene>
<dbReference type="EC" id="2.1.1.77" evidence="1"/>
<dbReference type="EMBL" id="CP001164">
    <property type="protein sequence ID" value="ACI38111.1"/>
    <property type="molecule type" value="Genomic_DNA"/>
</dbReference>
<dbReference type="RefSeq" id="WP_000254708.1">
    <property type="nucleotide sequence ID" value="NC_011353.1"/>
</dbReference>
<dbReference type="SMR" id="B5Z3A5"/>
<dbReference type="GeneID" id="93779263"/>
<dbReference type="KEGG" id="ecf:ECH74115_3994"/>
<dbReference type="HOGENOM" id="CLU_055432_2_0_6"/>
<dbReference type="GO" id="GO:0005737">
    <property type="term" value="C:cytoplasm"/>
    <property type="evidence" value="ECO:0007669"/>
    <property type="project" value="UniProtKB-SubCell"/>
</dbReference>
<dbReference type="GO" id="GO:0004719">
    <property type="term" value="F:protein-L-isoaspartate (D-aspartate) O-methyltransferase activity"/>
    <property type="evidence" value="ECO:0007669"/>
    <property type="project" value="UniProtKB-UniRule"/>
</dbReference>
<dbReference type="GO" id="GO:0032259">
    <property type="term" value="P:methylation"/>
    <property type="evidence" value="ECO:0007669"/>
    <property type="project" value="UniProtKB-KW"/>
</dbReference>
<dbReference type="GO" id="GO:0036211">
    <property type="term" value="P:protein modification process"/>
    <property type="evidence" value="ECO:0007669"/>
    <property type="project" value="UniProtKB-UniRule"/>
</dbReference>
<dbReference type="GO" id="GO:0030091">
    <property type="term" value="P:protein repair"/>
    <property type="evidence" value="ECO:0007669"/>
    <property type="project" value="UniProtKB-UniRule"/>
</dbReference>
<dbReference type="CDD" id="cd02440">
    <property type="entry name" value="AdoMet_MTases"/>
    <property type="match status" value="1"/>
</dbReference>
<dbReference type="FunFam" id="3.40.50.150:FF:000010">
    <property type="entry name" value="Protein-L-isoaspartate O-methyltransferase"/>
    <property type="match status" value="1"/>
</dbReference>
<dbReference type="Gene3D" id="3.40.50.150">
    <property type="entry name" value="Vaccinia Virus protein VP39"/>
    <property type="match status" value="1"/>
</dbReference>
<dbReference type="HAMAP" id="MF_00090">
    <property type="entry name" value="PIMT"/>
    <property type="match status" value="1"/>
</dbReference>
<dbReference type="InterPro" id="IPR000682">
    <property type="entry name" value="PCMT"/>
</dbReference>
<dbReference type="InterPro" id="IPR029063">
    <property type="entry name" value="SAM-dependent_MTases_sf"/>
</dbReference>
<dbReference type="NCBIfam" id="TIGR00080">
    <property type="entry name" value="pimt"/>
    <property type="match status" value="1"/>
</dbReference>
<dbReference type="NCBIfam" id="NF001453">
    <property type="entry name" value="PRK00312.1"/>
    <property type="match status" value="1"/>
</dbReference>
<dbReference type="PANTHER" id="PTHR11579">
    <property type="entry name" value="PROTEIN-L-ISOASPARTATE O-METHYLTRANSFERASE"/>
    <property type="match status" value="1"/>
</dbReference>
<dbReference type="PANTHER" id="PTHR11579:SF0">
    <property type="entry name" value="PROTEIN-L-ISOASPARTATE(D-ASPARTATE) O-METHYLTRANSFERASE"/>
    <property type="match status" value="1"/>
</dbReference>
<dbReference type="Pfam" id="PF01135">
    <property type="entry name" value="PCMT"/>
    <property type="match status" value="1"/>
</dbReference>
<dbReference type="SUPFAM" id="SSF53335">
    <property type="entry name" value="S-adenosyl-L-methionine-dependent methyltransferases"/>
    <property type="match status" value="1"/>
</dbReference>
<dbReference type="PROSITE" id="PS01279">
    <property type="entry name" value="PCMT"/>
    <property type="match status" value="1"/>
</dbReference>
<keyword id="KW-0963">Cytoplasm</keyword>
<keyword id="KW-0489">Methyltransferase</keyword>
<keyword id="KW-0949">S-adenosyl-L-methionine</keyword>
<keyword id="KW-0808">Transferase</keyword>
<accession>B5Z3A5</accession>
<proteinExistence type="inferred from homology"/>
<feature type="chain" id="PRO_1000093252" description="Protein-L-isoaspartate O-methyltransferase">
    <location>
        <begin position="1"/>
        <end position="208"/>
    </location>
</feature>
<feature type="active site" evidence="1">
    <location>
        <position position="59"/>
    </location>
</feature>
<evidence type="ECO:0000255" key="1">
    <source>
        <dbReference type="HAMAP-Rule" id="MF_00090"/>
    </source>
</evidence>
<comment type="function">
    <text evidence="1">Catalyzes the methyl esterification of L-isoaspartyl residues in peptides and proteins that result from spontaneous decomposition of normal L-aspartyl and L-asparaginyl residues. It plays a role in the repair and/or degradation of damaged proteins.</text>
</comment>
<comment type="catalytic activity">
    <reaction evidence="1">
        <text>[protein]-L-isoaspartate + S-adenosyl-L-methionine = [protein]-L-isoaspartate alpha-methyl ester + S-adenosyl-L-homocysteine</text>
        <dbReference type="Rhea" id="RHEA:12705"/>
        <dbReference type="Rhea" id="RHEA-COMP:12143"/>
        <dbReference type="Rhea" id="RHEA-COMP:12144"/>
        <dbReference type="ChEBI" id="CHEBI:57856"/>
        <dbReference type="ChEBI" id="CHEBI:59789"/>
        <dbReference type="ChEBI" id="CHEBI:90596"/>
        <dbReference type="ChEBI" id="CHEBI:90598"/>
        <dbReference type="EC" id="2.1.1.77"/>
    </reaction>
</comment>
<comment type="subcellular location">
    <subcellularLocation>
        <location evidence="1">Cytoplasm</location>
    </subcellularLocation>
</comment>
<comment type="similarity">
    <text evidence="1">Belongs to the methyltransferase superfamily. L-isoaspartyl/D-aspartyl protein methyltransferase family.</text>
</comment>
<protein>
    <recommendedName>
        <fullName evidence="1">Protein-L-isoaspartate O-methyltransferase</fullName>
        <ecNumber evidence="1">2.1.1.77</ecNumber>
    </recommendedName>
    <alternativeName>
        <fullName evidence="1">L-isoaspartyl protein carboxyl methyltransferase</fullName>
    </alternativeName>
    <alternativeName>
        <fullName evidence="1">Protein L-isoaspartyl methyltransferase</fullName>
    </alternativeName>
    <alternativeName>
        <fullName evidence="1">Protein-beta-aspartate methyltransferase</fullName>
        <shortName evidence="1">PIMT</shortName>
    </alternativeName>
</protein>
<sequence>MVSRRVQALLDQLRAQGIQDEQVLNALAAVPREKFVDEAFEQKAWDNIALPIGQGQTISQPYMVARMTELLELTPQSRVLEIGTGSGYQTAILAHLVQHVCSVERIKGLQWQARRRLKNLDLHNVSTRHGDGWQGWQARAPFDAIIVTAAPPEIPTALMTQLDEGGILVLPVGEEHQYLKRVRRRGGEFIIDTVEAVRFVPLVKGELA</sequence>